<evidence type="ECO:0000255" key="1">
    <source>
        <dbReference type="HAMAP-Rule" id="MF_00038"/>
    </source>
</evidence>
<protein>
    <recommendedName>
        <fullName evidence="1">Phospho-N-acetylmuramoyl-pentapeptide-transferase</fullName>
        <ecNumber evidence="1">2.7.8.13</ecNumber>
    </recommendedName>
    <alternativeName>
        <fullName evidence="1">UDP-MurNAc-pentapeptide phosphotransferase</fullName>
    </alternativeName>
</protein>
<gene>
    <name evidence="1" type="primary">mraY</name>
    <name type="ordered locus">Shew185_0398</name>
</gene>
<name>MRAY_SHEB8</name>
<dbReference type="EC" id="2.7.8.13" evidence="1"/>
<dbReference type="EMBL" id="CP000753">
    <property type="protein sequence ID" value="ABS06567.1"/>
    <property type="molecule type" value="Genomic_DNA"/>
</dbReference>
<dbReference type="RefSeq" id="WP_011982226.1">
    <property type="nucleotide sequence ID" value="NC_009665.1"/>
</dbReference>
<dbReference type="SMR" id="A6WIC8"/>
<dbReference type="KEGG" id="sbm:Shew185_0398"/>
<dbReference type="HOGENOM" id="CLU_023982_0_0_6"/>
<dbReference type="UniPathway" id="UPA00219"/>
<dbReference type="GO" id="GO:0005886">
    <property type="term" value="C:plasma membrane"/>
    <property type="evidence" value="ECO:0007669"/>
    <property type="project" value="UniProtKB-SubCell"/>
</dbReference>
<dbReference type="GO" id="GO:0046872">
    <property type="term" value="F:metal ion binding"/>
    <property type="evidence" value="ECO:0007669"/>
    <property type="project" value="UniProtKB-KW"/>
</dbReference>
<dbReference type="GO" id="GO:0008963">
    <property type="term" value="F:phospho-N-acetylmuramoyl-pentapeptide-transferase activity"/>
    <property type="evidence" value="ECO:0007669"/>
    <property type="project" value="UniProtKB-UniRule"/>
</dbReference>
<dbReference type="GO" id="GO:0051992">
    <property type="term" value="F:UDP-N-acetylmuramoyl-L-alanyl-D-glutamyl-meso-2,6-diaminopimelyl-D-alanyl-D-alanine:undecaprenyl-phosphate transferase activity"/>
    <property type="evidence" value="ECO:0007669"/>
    <property type="project" value="RHEA"/>
</dbReference>
<dbReference type="GO" id="GO:0051301">
    <property type="term" value="P:cell division"/>
    <property type="evidence" value="ECO:0007669"/>
    <property type="project" value="UniProtKB-KW"/>
</dbReference>
<dbReference type="GO" id="GO:0071555">
    <property type="term" value="P:cell wall organization"/>
    <property type="evidence" value="ECO:0007669"/>
    <property type="project" value="UniProtKB-KW"/>
</dbReference>
<dbReference type="GO" id="GO:0009252">
    <property type="term" value="P:peptidoglycan biosynthetic process"/>
    <property type="evidence" value="ECO:0007669"/>
    <property type="project" value="UniProtKB-UniRule"/>
</dbReference>
<dbReference type="GO" id="GO:0008360">
    <property type="term" value="P:regulation of cell shape"/>
    <property type="evidence" value="ECO:0007669"/>
    <property type="project" value="UniProtKB-KW"/>
</dbReference>
<dbReference type="CDD" id="cd06852">
    <property type="entry name" value="GT_MraY"/>
    <property type="match status" value="1"/>
</dbReference>
<dbReference type="HAMAP" id="MF_00038">
    <property type="entry name" value="MraY"/>
    <property type="match status" value="1"/>
</dbReference>
<dbReference type="InterPro" id="IPR000715">
    <property type="entry name" value="Glycosyl_transferase_4"/>
</dbReference>
<dbReference type="InterPro" id="IPR003524">
    <property type="entry name" value="PNAcMuramoyl-5peptid_Trfase"/>
</dbReference>
<dbReference type="InterPro" id="IPR018480">
    <property type="entry name" value="PNAcMuramoyl-5peptid_Trfase_CS"/>
</dbReference>
<dbReference type="NCBIfam" id="TIGR00445">
    <property type="entry name" value="mraY"/>
    <property type="match status" value="1"/>
</dbReference>
<dbReference type="PANTHER" id="PTHR22926">
    <property type="entry name" value="PHOSPHO-N-ACETYLMURAMOYL-PENTAPEPTIDE-TRANSFERASE"/>
    <property type="match status" value="1"/>
</dbReference>
<dbReference type="PANTHER" id="PTHR22926:SF5">
    <property type="entry name" value="PHOSPHO-N-ACETYLMURAMOYL-PENTAPEPTIDE-TRANSFERASE HOMOLOG"/>
    <property type="match status" value="1"/>
</dbReference>
<dbReference type="Pfam" id="PF00953">
    <property type="entry name" value="Glycos_transf_4"/>
    <property type="match status" value="1"/>
</dbReference>
<dbReference type="Pfam" id="PF10555">
    <property type="entry name" value="MraY_sig1"/>
    <property type="match status" value="1"/>
</dbReference>
<dbReference type="PROSITE" id="PS01347">
    <property type="entry name" value="MRAY_1"/>
    <property type="match status" value="1"/>
</dbReference>
<dbReference type="PROSITE" id="PS01348">
    <property type="entry name" value="MRAY_2"/>
    <property type="match status" value="1"/>
</dbReference>
<sequence length="360" mass="39688">MLVYLAEYLTRFHTGFNVFSYVTFRAILGLLTALVFSLWFGPKLIERLQLLQIGQVVRNDGPESHFSKRGTPTMGGLLILAAIFISVLLWGDLGSRYVWVMLFVLGSFGLIGFIDDYRKVVRKDTKGLIARWKYILQSLAALLIAFFLYATAANPGETQLVVPFFKDVMPQLGAVFIVLAYFTIVGASNAVNLTDGLDGLAIMPTVMVAAAFALIAYLSGHAQFANYLHIPHLPGSGELVIVCTAIVGAGLGFLWFNTYPAQVFMGDVGSLSLGAALGTIAVLVRQEILLVIMGGVFVMETLSVILQVGSYKLRGQRIFRMAPIHHHYELKGWPEPRVIVRFWIISIFLVLLGLATLKLR</sequence>
<proteinExistence type="inferred from homology"/>
<keyword id="KW-0131">Cell cycle</keyword>
<keyword id="KW-0132">Cell division</keyword>
<keyword id="KW-0997">Cell inner membrane</keyword>
<keyword id="KW-1003">Cell membrane</keyword>
<keyword id="KW-0133">Cell shape</keyword>
<keyword id="KW-0961">Cell wall biogenesis/degradation</keyword>
<keyword id="KW-0460">Magnesium</keyword>
<keyword id="KW-0472">Membrane</keyword>
<keyword id="KW-0479">Metal-binding</keyword>
<keyword id="KW-0573">Peptidoglycan synthesis</keyword>
<keyword id="KW-0808">Transferase</keyword>
<keyword id="KW-0812">Transmembrane</keyword>
<keyword id="KW-1133">Transmembrane helix</keyword>
<reference key="1">
    <citation type="submission" date="2007-07" db="EMBL/GenBank/DDBJ databases">
        <title>Complete sequence of chromosome of Shewanella baltica OS185.</title>
        <authorList>
            <consortium name="US DOE Joint Genome Institute"/>
            <person name="Copeland A."/>
            <person name="Lucas S."/>
            <person name="Lapidus A."/>
            <person name="Barry K."/>
            <person name="Glavina del Rio T."/>
            <person name="Dalin E."/>
            <person name="Tice H."/>
            <person name="Pitluck S."/>
            <person name="Sims D."/>
            <person name="Brettin T."/>
            <person name="Bruce D."/>
            <person name="Detter J.C."/>
            <person name="Han C."/>
            <person name="Schmutz J."/>
            <person name="Larimer F."/>
            <person name="Land M."/>
            <person name="Hauser L."/>
            <person name="Kyrpides N."/>
            <person name="Mikhailova N."/>
            <person name="Brettar I."/>
            <person name="Rodrigues J."/>
            <person name="Konstantinidis K."/>
            <person name="Tiedje J."/>
            <person name="Richardson P."/>
        </authorList>
    </citation>
    <scope>NUCLEOTIDE SEQUENCE [LARGE SCALE GENOMIC DNA]</scope>
    <source>
        <strain>OS185</strain>
    </source>
</reference>
<accession>A6WIC8</accession>
<organism>
    <name type="scientific">Shewanella baltica (strain OS185)</name>
    <dbReference type="NCBI Taxonomy" id="402882"/>
    <lineage>
        <taxon>Bacteria</taxon>
        <taxon>Pseudomonadati</taxon>
        <taxon>Pseudomonadota</taxon>
        <taxon>Gammaproteobacteria</taxon>
        <taxon>Alteromonadales</taxon>
        <taxon>Shewanellaceae</taxon>
        <taxon>Shewanella</taxon>
    </lineage>
</organism>
<comment type="function">
    <text evidence="1">Catalyzes the initial step of the lipid cycle reactions in the biosynthesis of the cell wall peptidoglycan: transfers peptidoglycan precursor phospho-MurNAc-pentapeptide from UDP-MurNAc-pentapeptide onto the lipid carrier undecaprenyl phosphate, yielding undecaprenyl-pyrophosphoryl-MurNAc-pentapeptide, known as lipid I.</text>
</comment>
<comment type="catalytic activity">
    <reaction evidence="1">
        <text>UDP-N-acetyl-alpha-D-muramoyl-L-alanyl-gamma-D-glutamyl-meso-2,6-diaminopimeloyl-D-alanyl-D-alanine + di-trans,octa-cis-undecaprenyl phosphate = di-trans,octa-cis-undecaprenyl diphospho-N-acetyl-alpha-D-muramoyl-L-alanyl-D-glutamyl-meso-2,6-diaminopimeloyl-D-alanyl-D-alanine + UMP</text>
        <dbReference type="Rhea" id="RHEA:28386"/>
        <dbReference type="ChEBI" id="CHEBI:57865"/>
        <dbReference type="ChEBI" id="CHEBI:60392"/>
        <dbReference type="ChEBI" id="CHEBI:61386"/>
        <dbReference type="ChEBI" id="CHEBI:61387"/>
        <dbReference type="EC" id="2.7.8.13"/>
    </reaction>
</comment>
<comment type="cofactor">
    <cofactor evidence="1">
        <name>Mg(2+)</name>
        <dbReference type="ChEBI" id="CHEBI:18420"/>
    </cofactor>
</comment>
<comment type="pathway">
    <text evidence="1">Cell wall biogenesis; peptidoglycan biosynthesis.</text>
</comment>
<comment type="subcellular location">
    <subcellularLocation>
        <location evidence="1">Cell inner membrane</location>
        <topology evidence="1">Multi-pass membrane protein</topology>
    </subcellularLocation>
</comment>
<comment type="similarity">
    <text evidence="1">Belongs to the glycosyltransferase 4 family. MraY subfamily.</text>
</comment>
<feature type="chain" id="PRO_1000003056" description="Phospho-N-acetylmuramoyl-pentapeptide-transferase">
    <location>
        <begin position="1"/>
        <end position="360"/>
    </location>
</feature>
<feature type="transmembrane region" description="Helical" evidence="1">
    <location>
        <begin position="26"/>
        <end position="46"/>
    </location>
</feature>
<feature type="transmembrane region" description="Helical" evidence="1">
    <location>
        <begin position="74"/>
        <end position="94"/>
    </location>
</feature>
<feature type="transmembrane region" description="Helical" evidence="1">
    <location>
        <begin position="97"/>
        <end position="117"/>
    </location>
</feature>
<feature type="transmembrane region" description="Helical" evidence="1">
    <location>
        <begin position="134"/>
        <end position="154"/>
    </location>
</feature>
<feature type="transmembrane region" description="Helical" evidence="1">
    <location>
        <begin position="168"/>
        <end position="188"/>
    </location>
</feature>
<feature type="transmembrane region" description="Helical" evidence="1">
    <location>
        <begin position="199"/>
        <end position="219"/>
    </location>
</feature>
<feature type="transmembrane region" description="Helical" evidence="1">
    <location>
        <begin position="236"/>
        <end position="256"/>
    </location>
</feature>
<feature type="transmembrane region" description="Helical" evidence="1">
    <location>
        <begin position="263"/>
        <end position="283"/>
    </location>
</feature>
<feature type="transmembrane region" description="Helical" evidence="1">
    <location>
        <begin position="288"/>
        <end position="308"/>
    </location>
</feature>
<feature type="transmembrane region" description="Helical" evidence="1">
    <location>
        <begin position="338"/>
        <end position="358"/>
    </location>
</feature>